<sequence>MGSKIVQVFLMLALFATSALAQAPAPTPTATPPPATPPPVATPPPVATPPPAATPAPATPPPAATPAPATTPPSVAPSPADVPTASPPAPEGPTVSPSSAPGPSDASPAPSAAFSNKAFFAGTAFAAIMYAAVLA</sequence>
<proteinExistence type="evidence at protein level"/>
<gene>
    <name type="primary">AGP4</name>
    <name type="ordered locus">At5g10430</name>
    <name type="ORF">F12B17_220</name>
</gene>
<dbReference type="EMBL" id="AF082301">
    <property type="protein sequence ID" value="AAC77826.1"/>
    <property type="molecule type" value="mRNA"/>
</dbReference>
<dbReference type="EMBL" id="AF060874">
    <property type="protein sequence ID" value="AAD38870.1"/>
    <property type="molecule type" value="mRNA"/>
</dbReference>
<dbReference type="EMBL" id="AL353995">
    <property type="protein sequence ID" value="CAB89400.1"/>
    <property type="molecule type" value="Genomic_DNA"/>
</dbReference>
<dbReference type="EMBL" id="CP002688">
    <property type="protein sequence ID" value="AED91539.1"/>
    <property type="molecule type" value="Genomic_DNA"/>
</dbReference>
<dbReference type="EMBL" id="AF372885">
    <property type="protein sequence ID" value="AAK49601.1"/>
    <property type="molecule type" value="mRNA"/>
</dbReference>
<dbReference type="EMBL" id="AY042794">
    <property type="protein sequence ID" value="AAK68734.1"/>
    <property type="molecule type" value="mRNA"/>
</dbReference>
<dbReference type="EMBL" id="BT002666">
    <property type="protein sequence ID" value="AAO11582.1"/>
    <property type="molecule type" value="mRNA"/>
</dbReference>
<dbReference type="PIR" id="T49996">
    <property type="entry name" value="T49996"/>
</dbReference>
<dbReference type="RefSeq" id="NP_196605.1">
    <property type="nucleotide sequence ID" value="NM_121081.3"/>
</dbReference>
<dbReference type="FunCoup" id="Q9ZT16">
    <property type="interactions" value="4"/>
</dbReference>
<dbReference type="STRING" id="3702.Q9ZT16"/>
<dbReference type="GlyCosmos" id="Q9ZT16">
    <property type="glycosylation" value="9 sites, No reported glycans"/>
</dbReference>
<dbReference type="GlyGen" id="Q9ZT16">
    <property type="glycosylation" value="9 sites"/>
</dbReference>
<dbReference type="PaxDb" id="3702-AT5G10430.1"/>
<dbReference type="EnsemblPlants" id="AT5G10430.1">
    <property type="protein sequence ID" value="AT5G10430.1"/>
    <property type="gene ID" value="AT5G10430"/>
</dbReference>
<dbReference type="GeneID" id="830907"/>
<dbReference type="Gramene" id="AT5G10430.1">
    <property type="protein sequence ID" value="AT5G10430.1"/>
    <property type="gene ID" value="AT5G10430"/>
</dbReference>
<dbReference type="KEGG" id="ath:AT5G10430"/>
<dbReference type="Araport" id="AT5G10430"/>
<dbReference type="TAIR" id="AT5G10430">
    <property type="gene designation" value="AGP4"/>
</dbReference>
<dbReference type="eggNOG" id="ENOG502SY2B">
    <property type="taxonomic scope" value="Eukaryota"/>
</dbReference>
<dbReference type="HOGENOM" id="CLU_149596_0_0_1"/>
<dbReference type="InParanoid" id="Q9ZT16"/>
<dbReference type="OMA" id="MEMGFAK"/>
<dbReference type="PRO" id="PR:Q9ZT16"/>
<dbReference type="Proteomes" id="UP000006548">
    <property type="component" value="Chromosome 5"/>
</dbReference>
<dbReference type="ExpressionAtlas" id="Q9ZT16">
    <property type="expression patterns" value="baseline and differential"/>
</dbReference>
<dbReference type="GO" id="GO:0005886">
    <property type="term" value="C:plasma membrane"/>
    <property type="evidence" value="ECO:0007669"/>
    <property type="project" value="UniProtKB-SubCell"/>
</dbReference>
<dbReference type="GO" id="GO:0098552">
    <property type="term" value="C:side of membrane"/>
    <property type="evidence" value="ECO:0007669"/>
    <property type="project" value="UniProtKB-KW"/>
</dbReference>
<dbReference type="GO" id="GO:0010198">
    <property type="term" value="P:synergid death"/>
    <property type="evidence" value="ECO:0000315"/>
    <property type="project" value="TAIR"/>
</dbReference>
<dbReference type="InterPro" id="IPR044959">
    <property type="entry name" value="AGP"/>
</dbReference>
<dbReference type="PANTHER" id="PTHR36321:SF6">
    <property type="entry name" value="CLASSICAL ARABINOGALACTAN PROTEIN 4-RELATED"/>
    <property type="match status" value="1"/>
</dbReference>
<dbReference type="PANTHER" id="PTHR36321">
    <property type="entry name" value="CLASSICAL ARABINOGALACTAN PROTEIN 9"/>
    <property type="match status" value="1"/>
</dbReference>
<dbReference type="PRINTS" id="PR01217">
    <property type="entry name" value="PRICHEXTENSN"/>
</dbReference>
<evidence type="ECO:0000255" key="1"/>
<evidence type="ECO:0000256" key="2">
    <source>
        <dbReference type="SAM" id="MobiDB-lite"/>
    </source>
</evidence>
<evidence type="ECO:0000269" key="3">
    <source>
    </source>
</evidence>
<evidence type="ECO:0000305" key="4"/>
<feature type="signal peptide" evidence="3">
    <location>
        <begin position="1"/>
        <end position="21"/>
    </location>
</feature>
<feature type="chain" id="PRO_0000268991" description="Classical arabinogalactan protein 4">
    <location>
        <begin position="22"/>
        <end position="111"/>
    </location>
</feature>
<feature type="propeptide" id="PRO_0000268992" description="Removed in mature form" evidence="1">
    <location>
        <begin position="112"/>
        <end position="135"/>
    </location>
</feature>
<feature type="region of interest" description="Disordered" evidence="2">
    <location>
        <begin position="22"/>
        <end position="112"/>
    </location>
</feature>
<feature type="compositionally biased region" description="Pro residues" evidence="2">
    <location>
        <begin position="25"/>
        <end position="76"/>
    </location>
</feature>
<feature type="compositionally biased region" description="Low complexity" evidence="2">
    <location>
        <begin position="96"/>
        <end position="112"/>
    </location>
</feature>
<feature type="modified residue" description="Pyrrolidone carboxylic acid" evidence="3">
    <location>
        <position position="22"/>
    </location>
</feature>
<feature type="modified residue" description="4-hydroxyproline" evidence="3">
    <location>
        <position position="24"/>
    </location>
</feature>
<feature type="modified residue" description="4-hydroxyproline" evidence="3">
    <location>
        <position position="26"/>
    </location>
</feature>
<feature type="modified residue" description="4-hydroxyproline" evidence="3">
    <location>
        <position position="28"/>
    </location>
</feature>
<feature type="modified residue" description="4-hydroxyproline" evidence="3">
    <location>
        <position position="32"/>
    </location>
</feature>
<feature type="modified residue" description="4-hydroxyproline" evidence="3">
    <location>
        <position position="33"/>
    </location>
</feature>
<feature type="modified residue" description="4-hydroxyproline" evidence="3">
    <location>
        <position position="34"/>
    </location>
</feature>
<feature type="modified residue" description="4-hydroxyproline" evidence="3">
    <location>
        <position position="37"/>
    </location>
</feature>
<feature type="modified residue" description="4-hydroxyproline" evidence="3">
    <location>
        <position position="38"/>
    </location>
</feature>
<feature type="modified residue" description="4-hydroxyproline" evidence="3">
    <location>
        <position position="39"/>
    </location>
</feature>
<feature type="lipid moiety-binding region" description="GPI-anchor amidated serine" evidence="1">
    <location>
        <position position="111"/>
    </location>
</feature>
<feature type="glycosylation site" description="O-linked (Ara...) hydroxyproline" evidence="1">
    <location>
        <position position="24"/>
    </location>
</feature>
<feature type="glycosylation site" description="O-linked (Ara...) hydroxyproline" evidence="1">
    <location>
        <position position="26"/>
    </location>
</feature>
<feature type="glycosylation site" description="O-linked (Ara...) hydroxyproline" evidence="1">
    <location>
        <position position="28"/>
    </location>
</feature>
<feature type="glycosylation site" description="O-linked (Ara...) hydroxyproline" evidence="1">
    <location>
        <position position="32"/>
    </location>
</feature>
<feature type="glycosylation site" description="O-linked (Ara...) hydroxyproline" evidence="1">
    <location>
        <position position="33"/>
    </location>
</feature>
<feature type="glycosylation site" description="O-linked (Ara...) hydroxyproline" evidence="1">
    <location>
        <position position="34"/>
    </location>
</feature>
<feature type="glycosylation site" description="O-linked (Ara...) hydroxyproline" evidence="1">
    <location>
        <position position="37"/>
    </location>
</feature>
<feature type="glycosylation site" description="O-linked (Ara...) hydroxyproline" evidence="1">
    <location>
        <position position="38"/>
    </location>
</feature>
<feature type="glycosylation site" description="O-linked (Ara...) hydroxyproline" evidence="1">
    <location>
        <position position="39"/>
    </location>
</feature>
<reference key="1">
    <citation type="journal article" date="1998" name="Trends Plant Sci.">
        <title>GPI-anchors on arabinogalactan-proteins: implications for signalling in plants.</title>
        <authorList>
            <person name="Schultz C.J."/>
            <person name="Gilson P.R."/>
            <person name="Oxley D."/>
            <person name="Youl J.J."/>
            <person name="Bacic A."/>
        </authorList>
    </citation>
    <scope>NUCLEOTIDE SEQUENCE [MRNA]</scope>
    <source>
        <strain>cv. Columbia</strain>
    </source>
</reference>
<reference key="2">
    <citation type="journal article" date="1999" name="Electrophoresis">
        <title>Glycosylphosphatidylinositol-anchored cell-surface proteins from Arabidopsis.</title>
        <authorList>
            <person name="Sherrier D.J."/>
            <person name="Prime T.A."/>
            <person name="Dupree P."/>
        </authorList>
    </citation>
    <scope>NUCLEOTIDE SEQUENCE [MRNA]</scope>
    <source>
        <strain>cv. Columbia</strain>
    </source>
</reference>
<reference key="3">
    <citation type="journal article" date="2000" name="Nature">
        <title>Sequence and analysis of chromosome 5 of the plant Arabidopsis thaliana.</title>
        <authorList>
            <person name="Tabata S."/>
            <person name="Kaneko T."/>
            <person name="Nakamura Y."/>
            <person name="Kotani H."/>
            <person name="Kato T."/>
            <person name="Asamizu E."/>
            <person name="Miyajima N."/>
            <person name="Sasamoto S."/>
            <person name="Kimura T."/>
            <person name="Hosouchi T."/>
            <person name="Kawashima K."/>
            <person name="Kohara M."/>
            <person name="Matsumoto M."/>
            <person name="Matsuno A."/>
            <person name="Muraki A."/>
            <person name="Nakayama S."/>
            <person name="Nakazaki N."/>
            <person name="Naruo K."/>
            <person name="Okumura S."/>
            <person name="Shinpo S."/>
            <person name="Takeuchi C."/>
            <person name="Wada T."/>
            <person name="Watanabe A."/>
            <person name="Yamada M."/>
            <person name="Yasuda M."/>
            <person name="Sato S."/>
            <person name="de la Bastide M."/>
            <person name="Huang E."/>
            <person name="Spiegel L."/>
            <person name="Gnoj L."/>
            <person name="O'Shaughnessy A."/>
            <person name="Preston R."/>
            <person name="Habermann K."/>
            <person name="Murray J."/>
            <person name="Johnson D."/>
            <person name="Rohlfing T."/>
            <person name="Nelson J."/>
            <person name="Stoneking T."/>
            <person name="Pepin K."/>
            <person name="Spieth J."/>
            <person name="Sekhon M."/>
            <person name="Armstrong J."/>
            <person name="Becker M."/>
            <person name="Belter E."/>
            <person name="Cordum H."/>
            <person name="Cordes M."/>
            <person name="Courtney L."/>
            <person name="Courtney W."/>
            <person name="Dante M."/>
            <person name="Du H."/>
            <person name="Edwards J."/>
            <person name="Fryman J."/>
            <person name="Haakensen B."/>
            <person name="Lamar E."/>
            <person name="Latreille P."/>
            <person name="Leonard S."/>
            <person name="Meyer R."/>
            <person name="Mulvaney E."/>
            <person name="Ozersky P."/>
            <person name="Riley A."/>
            <person name="Strowmatt C."/>
            <person name="Wagner-McPherson C."/>
            <person name="Wollam A."/>
            <person name="Yoakum M."/>
            <person name="Bell M."/>
            <person name="Dedhia N."/>
            <person name="Parnell L."/>
            <person name="Shah R."/>
            <person name="Rodriguez M."/>
            <person name="Hoon See L."/>
            <person name="Vil D."/>
            <person name="Baker J."/>
            <person name="Kirchoff K."/>
            <person name="Toth K."/>
            <person name="King L."/>
            <person name="Bahret A."/>
            <person name="Miller B."/>
            <person name="Marra M.A."/>
            <person name="Martienssen R."/>
            <person name="McCombie W.R."/>
            <person name="Wilson R.K."/>
            <person name="Murphy G."/>
            <person name="Bancroft I."/>
            <person name="Volckaert G."/>
            <person name="Wambutt R."/>
            <person name="Duesterhoeft A."/>
            <person name="Stiekema W."/>
            <person name="Pohl T."/>
            <person name="Entian K.-D."/>
            <person name="Terryn N."/>
            <person name="Hartley N."/>
            <person name="Bent E."/>
            <person name="Johnson S."/>
            <person name="Langham S.-A."/>
            <person name="McCullagh B."/>
            <person name="Robben J."/>
            <person name="Grymonprez B."/>
            <person name="Zimmermann W."/>
            <person name="Ramsperger U."/>
            <person name="Wedler H."/>
            <person name="Balke K."/>
            <person name="Wedler E."/>
            <person name="Peters S."/>
            <person name="van Staveren M."/>
            <person name="Dirkse W."/>
            <person name="Mooijman P."/>
            <person name="Klein Lankhorst R."/>
            <person name="Weitzenegger T."/>
            <person name="Bothe G."/>
            <person name="Rose M."/>
            <person name="Hauf J."/>
            <person name="Berneiser S."/>
            <person name="Hempel S."/>
            <person name="Feldpausch M."/>
            <person name="Lamberth S."/>
            <person name="Villarroel R."/>
            <person name="Gielen J."/>
            <person name="Ardiles W."/>
            <person name="Bents O."/>
            <person name="Lemcke K."/>
            <person name="Kolesov G."/>
            <person name="Mayer K.F.X."/>
            <person name="Rudd S."/>
            <person name="Schoof H."/>
            <person name="Schueller C."/>
            <person name="Zaccaria P."/>
            <person name="Mewes H.-W."/>
            <person name="Bevan M."/>
            <person name="Fransz P.F."/>
        </authorList>
    </citation>
    <scope>NUCLEOTIDE SEQUENCE [LARGE SCALE GENOMIC DNA]</scope>
    <source>
        <strain>cv. Columbia</strain>
    </source>
</reference>
<reference key="4">
    <citation type="journal article" date="2017" name="Plant J.">
        <title>Araport11: a complete reannotation of the Arabidopsis thaliana reference genome.</title>
        <authorList>
            <person name="Cheng C.Y."/>
            <person name="Krishnakumar V."/>
            <person name="Chan A.P."/>
            <person name="Thibaud-Nissen F."/>
            <person name="Schobel S."/>
            <person name="Town C.D."/>
        </authorList>
    </citation>
    <scope>GENOME REANNOTATION</scope>
    <source>
        <strain>cv. Columbia</strain>
    </source>
</reference>
<reference key="5">
    <citation type="journal article" date="2003" name="Science">
        <title>Empirical analysis of transcriptional activity in the Arabidopsis genome.</title>
        <authorList>
            <person name="Yamada K."/>
            <person name="Lim J."/>
            <person name="Dale J.M."/>
            <person name="Chen H."/>
            <person name="Shinn P."/>
            <person name="Palm C.J."/>
            <person name="Southwick A.M."/>
            <person name="Wu H.C."/>
            <person name="Kim C.J."/>
            <person name="Nguyen M."/>
            <person name="Pham P.K."/>
            <person name="Cheuk R.F."/>
            <person name="Karlin-Newmann G."/>
            <person name="Liu S.X."/>
            <person name="Lam B."/>
            <person name="Sakano H."/>
            <person name="Wu T."/>
            <person name="Yu G."/>
            <person name="Miranda M."/>
            <person name="Quach H.L."/>
            <person name="Tripp M."/>
            <person name="Chang C.H."/>
            <person name="Lee J.M."/>
            <person name="Toriumi M.J."/>
            <person name="Chan M.M."/>
            <person name="Tang C.C."/>
            <person name="Onodera C.S."/>
            <person name="Deng J.M."/>
            <person name="Akiyama K."/>
            <person name="Ansari Y."/>
            <person name="Arakawa T."/>
            <person name="Banh J."/>
            <person name="Banno F."/>
            <person name="Bowser L."/>
            <person name="Brooks S.Y."/>
            <person name="Carninci P."/>
            <person name="Chao Q."/>
            <person name="Choy N."/>
            <person name="Enju A."/>
            <person name="Goldsmith A.D."/>
            <person name="Gurjal M."/>
            <person name="Hansen N.F."/>
            <person name="Hayashizaki Y."/>
            <person name="Johnson-Hopson C."/>
            <person name="Hsuan V.W."/>
            <person name="Iida K."/>
            <person name="Karnes M."/>
            <person name="Khan S."/>
            <person name="Koesema E."/>
            <person name="Ishida J."/>
            <person name="Jiang P.X."/>
            <person name="Jones T."/>
            <person name="Kawai J."/>
            <person name="Kamiya A."/>
            <person name="Meyers C."/>
            <person name="Nakajima M."/>
            <person name="Narusaka M."/>
            <person name="Seki M."/>
            <person name="Sakurai T."/>
            <person name="Satou M."/>
            <person name="Tamse R."/>
            <person name="Vaysberg M."/>
            <person name="Wallender E.K."/>
            <person name="Wong C."/>
            <person name="Yamamura Y."/>
            <person name="Yuan S."/>
            <person name="Shinozaki K."/>
            <person name="Davis R.W."/>
            <person name="Theologis A."/>
            <person name="Ecker J.R."/>
        </authorList>
    </citation>
    <scope>NUCLEOTIDE SEQUENCE [LARGE SCALE MRNA]</scope>
    <source>
        <strain>cv. Columbia</strain>
    </source>
</reference>
<reference key="6">
    <citation type="journal article" date="2000" name="Plant Cell">
        <title>The classical arabinogalactan protein gene family of Arabidopsis.</title>
        <authorList>
            <person name="Schultz C.J."/>
            <person name="Johnson K.L."/>
            <person name="Currie G."/>
            <person name="Bacic A."/>
        </authorList>
    </citation>
    <scope>PROTEIN SEQUENCE OF 22-40</scope>
    <scope>HYDROXYLATION AT PRO-24; PRO-26; PRO-28; PRO-32; PRO-33; PRO-34; PRO-37; PRO-38 AND PRO-39</scope>
    <scope>PYROGLUTAMATE FORMATION AT GLN-22</scope>
    <scope>TISSUE SPECIFICITY</scope>
    <source>
        <strain>cv. Columbia</strain>
    </source>
</reference>
<reference key="7">
    <citation type="journal article" date="2002" name="Plant Physiol.">
        <title>Using genomic resources to guide research directions. The arabinogalactan protein gene family as a test case.</title>
        <authorList>
            <person name="Schultz C.J."/>
            <person name="Rumsewicz M.P."/>
            <person name="Johnson K.L."/>
            <person name="Jones B.J."/>
            <person name="Gaspar Y.M."/>
            <person name="Bacic A."/>
        </authorList>
    </citation>
    <scope>GENE FAMILY</scope>
    <scope>NOMENCLATURE</scope>
</reference>
<keyword id="KW-1003">Cell membrane</keyword>
<keyword id="KW-0903">Direct protein sequencing</keyword>
<keyword id="KW-0325">Glycoprotein</keyword>
<keyword id="KW-0336">GPI-anchor</keyword>
<keyword id="KW-0379">Hydroxylation</keyword>
<keyword id="KW-0449">Lipoprotein</keyword>
<keyword id="KW-0472">Membrane</keyword>
<keyword id="KW-0654">Proteoglycan</keyword>
<keyword id="KW-0873">Pyrrolidone carboxylic acid</keyword>
<keyword id="KW-1185">Reference proteome</keyword>
<keyword id="KW-0732">Signal</keyword>
<organism>
    <name type="scientific">Arabidopsis thaliana</name>
    <name type="common">Mouse-ear cress</name>
    <dbReference type="NCBI Taxonomy" id="3702"/>
    <lineage>
        <taxon>Eukaryota</taxon>
        <taxon>Viridiplantae</taxon>
        <taxon>Streptophyta</taxon>
        <taxon>Embryophyta</taxon>
        <taxon>Tracheophyta</taxon>
        <taxon>Spermatophyta</taxon>
        <taxon>Magnoliopsida</taxon>
        <taxon>eudicotyledons</taxon>
        <taxon>Gunneridae</taxon>
        <taxon>Pentapetalae</taxon>
        <taxon>rosids</taxon>
        <taxon>malvids</taxon>
        <taxon>Brassicales</taxon>
        <taxon>Brassicaceae</taxon>
        <taxon>Camelineae</taxon>
        <taxon>Arabidopsis</taxon>
    </lineage>
</organism>
<comment type="function">
    <text>Proteoglycan that seems to be implicated in diverse developmental roles such as differentiation, cell-cell recognition, embryogenesis and programmed cell death.</text>
</comment>
<comment type="subcellular location">
    <subcellularLocation>
        <location evidence="4">Cell membrane</location>
        <topology evidence="4">Lipid-anchor</topology>
        <topology evidence="4">GPI-anchor</topology>
    </subcellularLocation>
</comment>
<comment type="tissue specificity">
    <text evidence="3">Highly expressed in roots, flowers and leaves.</text>
</comment>
<comment type="PTM">
    <text>O-glycosylated on hydroxyprolines; noncontiguous hydroxylproline residues are glycosylated with arabinogalactan.</text>
</comment>
<comment type="similarity">
    <text evidence="4">Belongs to the classical AGP family.</text>
</comment>
<accession>Q9ZT16</accession>
<protein>
    <recommendedName>
        <fullName>Classical arabinogalactan protein 4</fullName>
    </recommendedName>
</protein>
<name>AGP4_ARATH</name>